<feature type="chain" id="PRO_0000269891" description="AN1-type zinc finger protein 2A">
    <location>
        <begin position="1"/>
        <end position="194"/>
    </location>
</feature>
<feature type="zinc finger region" description="AN1-type 1" evidence="2">
    <location>
        <begin position="4"/>
        <end position="52"/>
    </location>
</feature>
<feature type="zinc finger region" description="AN1-type 2" evidence="2">
    <location>
        <begin position="94"/>
        <end position="142"/>
    </location>
</feature>
<feature type="region of interest" description="Disordered" evidence="3">
    <location>
        <begin position="145"/>
        <end position="164"/>
    </location>
</feature>
<feature type="binding site" evidence="2">
    <location>
        <position position="10"/>
    </location>
    <ligand>
        <name>Zn(2+)</name>
        <dbReference type="ChEBI" id="CHEBI:29105"/>
        <label>1</label>
    </ligand>
</feature>
<feature type="binding site" evidence="2">
    <location>
        <position position="15"/>
    </location>
    <ligand>
        <name>Zn(2+)</name>
        <dbReference type="ChEBI" id="CHEBI:29105"/>
        <label>1</label>
    </ligand>
</feature>
<feature type="binding site" evidence="2">
    <location>
        <position position="25"/>
    </location>
    <ligand>
        <name>Zn(2+)</name>
        <dbReference type="ChEBI" id="CHEBI:29105"/>
        <label>2</label>
    </ligand>
</feature>
<feature type="binding site" evidence="2">
    <location>
        <position position="28"/>
    </location>
    <ligand>
        <name>Zn(2+)</name>
        <dbReference type="ChEBI" id="CHEBI:29105"/>
        <label>2</label>
    </ligand>
</feature>
<feature type="binding site" evidence="2">
    <location>
        <position position="33"/>
    </location>
    <ligand>
        <name>Zn(2+)</name>
        <dbReference type="ChEBI" id="CHEBI:29105"/>
        <label>1</label>
    </ligand>
</feature>
<feature type="binding site" evidence="2">
    <location>
        <position position="36"/>
    </location>
    <ligand>
        <name>Zn(2+)</name>
        <dbReference type="ChEBI" id="CHEBI:29105"/>
        <label>1</label>
    </ligand>
</feature>
<feature type="binding site" evidence="2">
    <location>
        <position position="42"/>
    </location>
    <ligand>
        <name>Zn(2+)</name>
        <dbReference type="ChEBI" id="CHEBI:29105"/>
        <label>2</label>
    </ligand>
</feature>
<feature type="binding site" evidence="2">
    <location>
        <position position="44"/>
    </location>
    <ligand>
        <name>Zn(2+)</name>
        <dbReference type="ChEBI" id="CHEBI:29105"/>
        <label>2</label>
    </ligand>
</feature>
<feature type="binding site" evidence="2">
    <location>
        <position position="100"/>
    </location>
    <ligand>
        <name>Zn(2+)</name>
        <dbReference type="ChEBI" id="CHEBI:29105"/>
        <label>3</label>
    </ligand>
</feature>
<feature type="binding site" evidence="2">
    <location>
        <position position="105"/>
    </location>
    <ligand>
        <name>Zn(2+)</name>
        <dbReference type="ChEBI" id="CHEBI:29105"/>
        <label>3</label>
    </ligand>
</feature>
<feature type="binding site" evidence="2">
    <location>
        <position position="115"/>
    </location>
    <ligand>
        <name>Zn(2+)</name>
        <dbReference type="ChEBI" id="CHEBI:29105"/>
        <label>4</label>
    </ligand>
</feature>
<feature type="binding site" evidence="2">
    <location>
        <position position="118"/>
    </location>
    <ligand>
        <name>Zn(2+)</name>
        <dbReference type="ChEBI" id="CHEBI:29105"/>
        <label>4</label>
    </ligand>
</feature>
<feature type="binding site" evidence="2">
    <location>
        <position position="123"/>
    </location>
    <ligand>
        <name>Zn(2+)</name>
        <dbReference type="ChEBI" id="CHEBI:29105"/>
        <label>3</label>
    </ligand>
</feature>
<feature type="binding site" evidence="2">
    <location>
        <position position="126"/>
    </location>
    <ligand>
        <name>Zn(2+)</name>
        <dbReference type="ChEBI" id="CHEBI:29105"/>
        <label>3</label>
    </ligand>
</feature>
<feature type="binding site" evidence="2">
    <location>
        <position position="132"/>
    </location>
    <ligand>
        <name>Zn(2+)</name>
        <dbReference type="ChEBI" id="CHEBI:29105"/>
        <label>4</label>
    </ligand>
</feature>
<feature type="binding site" evidence="2">
    <location>
        <position position="134"/>
    </location>
    <ligand>
        <name>Zn(2+)</name>
        <dbReference type="ChEBI" id="CHEBI:29105"/>
        <label>4</label>
    </ligand>
</feature>
<gene>
    <name type="primary">ZFAND2A</name>
</gene>
<protein>
    <recommendedName>
        <fullName>AN1-type zinc finger protein 2A</fullName>
    </recommendedName>
</protein>
<organism>
    <name type="scientific">Pongo abelii</name>
    <name type="common">Sumatran orangutan</name>
    <name type="synonym">Pongo pygmaeus abelii</name>
    <dbReference type="NCBI Taxonomy" id="9601"/>
    <lineage>
        <taxon>Eukaryota</taxon>
        <taxon>Metazoa</taxon>
        <taxon>Chordata</taxon>
        <taxon>Craniata</taxon>
        <taxon>Vertebrata</taxon>
        <taxon>Euteleostomi</taxon>
        <taxon>Mammalia</taxon>
        <taxon>Eutheria</taxon>
        <taxon>Euarchontoglires</taxon>
        <taxon>Primates</taxon>
        <taxon>Haplorrhini</taxon>
        <taxon>Catarrhini</taxon>
        <taxon>Hominidae</taxon>
        <taxon>Pongo</taxon>
    </lineage>
</organism>
<accession>Q5R966</accession>
<evidence type="ECO:0000250" key="1"/>
<evidence type="ECO:0000255" key="2">
    <source>
        <dbReference type="PROSITE-ProRule" id="PRU00449"/>
    </source>
</evidence>
<evidence type="ECO:0000256" key="3">
    <source>
        <dbReference type="SAM" id="MobiDB-lite"/>
    </source>
</evidence>
<sequence length="194" mass="21439">MEFPDLGKHCSEKTCKQLDFLPVKCDACKQDFCKDHFTYAAHKCPFAFQKDVHVPVCPLCNTPIPVKKGQIPDVVVGDHIDRDCDSHPGKKKEKIFTYRCSKEGCKKKEMLQMSCAQCHGNFCIQHRHPLDHSCRHGSRPTIKAGCSPVTASESKPSGDPHPGSWRAVPATQVLVHPAHVNAVTSVWGAAALGW</sequence>
<dbReference type="EMBL" id="CR859526">
    <property type="protein sequence ID" value="CAH91694.1"/>
    <property type="molecule type" value="Transcribed_RNA"/>
</dbReference>
<dbReference type="SMR" id="Q5R966"/>
<dbReference type="FunCoup" id="Q5R966">
    <property type="interactions" value="541"/>
</dbReference>
<dbReference type="STRING" id="9601.ENSPPYP00000019387"/>
<dbReference type="eggNOG" id="KOG3183">
    <property type="taxonomic scope" value="Eukaryota"/>
</dbReference>
<dbReference type="HOGENOM" id="CLU_061621_3_0_1"/>
<dbReference type="InParanoid" id="Q5R966"/>
<dbReference type="Proteomes" id="UP000001595">
    <property type="component" value="Unplaced"/>
</dbReference>
<dbReference type="GO" id="GO:0005783">
    <property type="term" value="C:endoplasmic reticulum"/>
    <property type="evidence" value="ECO:0007669"/>
    <property type="project" value="TreeGrafter"/>
</dbReference>
<dbReference type="GO" id="GO:0005634">
    <property type="term" value="C:nucleus"/>
    <property type="evidence" value="ECO:0007669"/>
    <property type="project" value="UniProtKB-SubCell"/>
</dbReference>
<dbReference type="GO" id="GO:0008270">
    <property type="term" value="F:zinc ion binding"/>
    <property type="evidence" value="ECO:0007669"/>
    <property type="project" value="UniProtKB-KW"/>
</dbReference>
<dbReference type="GO" id="GO:0043161">
    <property type="term" value="P:proteasome-mediated ubiquitin-dependent protein catabolic process"/>
    <property type="evidence" value="ECO:0007669"/>
    <property type="project" value="TreeGrafter"/>
</dbReference>
<dbReference type="GO" id="GO:0045047">
    <property type="term" value="P:protein targeting to ER"/>
    <property type="evidence" value="ECO:0007669"/>
    <property type="project" value="TreeGrafter"/>
</dbReference>
<dbReference type="FunFam" id="4.10.1110.10:FF:000003">
    <property type="entry name" value="AN1-type zinc finger protein 2B isoform X1"/>
    <property type="match status" value="1"/>
</dbReference>
<dbReference type="FunFam" id="4.10.1110.10:FF:000004">
    <property type="entry name" value="AN1-type zinc finger protein 2B isoform X1"/>
    <property type="match status" value="1"/>
</dbReference>
<dbReference type="Gene3D" id="4.10.1110.10">
    <property type="entry name" value="AN1-like Zinc finger"/>
    <property type="match status" value="2"/>
</dbReference>
<dbReference type="InterPro" id="IPR035896">
    <property type="entry name" value="AN1-like_Znf"/>
</dbReference>
<dbReference type="InterPro" id="IPR000058">
    <property type="entry name" value="Znf_AN1"/>
</dbReference>
<dbReference type="PANTHER" id="PTHR14677:SF11">
    <property type="entry name" value="AN1-TYPE ZINC FINGER PROTEIN 2A"/>
    <property type="match status" value="1"/>
</dbReference>
<dbReference type="PANTHER" id="PTHR14677">
    <property type="entry name" value="ARSENITE INDUCUBLE RNA ASSOCIATED PROTEIN AIP-1-RELATED"/>
    <property type="match status" value="1"/>
</dbReference>
<dbReference type="Pfam" id="PF01428">
    <property type="entry name" value="zf-AN1"/>
    <property type="match status" value="2"/>
</dbReference>
<dbReference type="Pfam" id="PF25403">
    <property type="entry name" value="zf-C2H2_ZFAND2"/>
    <property type="match status" value="1"/>
</dbReference>
<dbReference type="SMART" id="SM00154">
    <property type="entry name" value="ZnF_AN1"/>
    <property type="match status" value="2"/>
</dbReference>
<dbReference type="SUPFAM" id="SSF118310">
    <property type="entry name" value="AN1-like Zinc finger"/>
    <property type="match status" value="2"/>
</dbReference>
<dbReference type="PROSITE" id="PS51039">
    <property type="entry name" value="ZF_AN1"/>
    <property type="match status" value="2"/>
</dbReference>
<keyword id="KW-0963">Cytoplasm</keyword>
<keyword id="KW-0479">Metal-binding</keyword>
<keyword id="KW-0539">Nucleus</keyword>
<keyword id="KW-1185">Reference proteome</keyword>
<keyword id="KW-0677">Repeat</keyword>
<keyword id="KW-0862">Zinc</keyword>
<keyword id="KW-0863">Zinc-finger</keyword>
<reference key="1">
    <citation type="submission" date="2004-11" db="EMBL/GenBank/DDBJ databases">
        <authorList>
            <consortium name="The German cDNA consortium"/>
        </authorList>
    </citation>
    <scope>NUCLEOTIDE SEQUENCE [LARGE SCALE MRNA]</scope>
    <source>
        <tissue>Brain cortex</tissue>
    </source>
</reference>
<name>ZFN2A_PONAB</name>
<proteinExistence type="inferred from homology"/>
<comment type="subcellular location">
    <subcellularLocation>
        <location evidence="1">Cytoplasm</location>
    </subcellularLocation>
    <subcellularLocation>
        <location evidence="1">Nucleus</location>
    </subcellularLocation>
</comment>